<sequence length="141" mass="15079">MAKKIAAQFRLLLPAGKATPAPPVGPALGQRGVNIMEFIKRFNAATASMGDVLVPVDVTVFADKSFTFEVRTPPASFLLKKAAKVEKGSGEPNKVTVGKVTRAQVEEIAKQKMKDLNTEDLEAAVRIIEGTARSMGIQVVD</sequence>
<proteinExistence type="inferred from homology"/>
<name>RL11_COPPD</name>
<organism>
    <name type="scientific">Coprothermobacter proteolyticus (strain ATCC 35245 / DSM 5265 / OCM 4 / BT)</name>
    <dbReference type="NCBI Taxonomy" id="309798"/>
    <lineage>
        <taxon>Bacteria</taxon>
        <taxon>Pseudomonadati</taxon>
        <taxon>Coprothermobacterota</taxon>
        <taxon>Coprothermobacteria</taxon>
        <taxon>Coprothermobacterales</taxon>
        <taxon>Coprothermobacteraceae</taxon>
        <taxon>Coprothermobacter</taxon>
    </lineage>
</organism>
<accession>B5Y934</accession>
<protein>
    <recommendedName>
        <fullName evidence="1">Large ribosomal subunit protein uL11</fullName>
    </recommendedName>
    <alternativeName>
        <fullName evidence="2">50S ribosomal protein L11</fullName>
    </alternativeName>
</protein>
<comment type="function">
    <text evidence="1">Forms part of the ribosomal stalk which helps the ribosome interact with GTP-bound translation factors.</text>
</comment>
<comment type="subunit">
    <text evidence="1">Part of the ribosomal stalk of the 50S ribosomal subunit. Interacts with L10 and the large rRNA to form the base of the stalk. L10 forms an elongated spine to which L12 dimers bind in a sequential fashion forming a multimeric L10(L12)X complex.</text>
</comment>
<comment type="PTM">
    <text evidence="1">One or more lysine residues are methylated.</text>
</comment>
<comment type="similarity">
    <text evidence="1">Belongs to the universal ribosomal protein uL11 family.</text>
</comment>
<keyword id="KW-0488">Methylation</keyword>
<keyword id="KW-1185">Reference proteome</keyword>
<keyword id="KW-0687">Ribonucleoprotein</keyword>
<keyword id="KW-0689">Ribosomal protein</keyword>
<keyword id="KW-0694">RNA-binding</keyword>
<keyword id="KW-0699">rRNA-binding</keyword>
<dbReference type="EMBL" id="CP001145">
    <property type="protein sequence ID" value="ACI17664.1"/>
    <property type="molecule type" value="Genomic_DNA"/>
</dbReference>
<dbReference type="RefSeq" id="WP_012544316.1">
    <property type="nucleotide sequence ID" value="NC_011295.1"/>
</dbReference>
<dbReference type="SMR" id="B5Y934"/>
<dbReference type="STRING" id="309798.COPRO5265_0952"/>
<dbReference type="KEGG" id="cpo:COPRO5265_0952"/>
<dbReference type="eggNOG" id="COG0080">
    <property type="taxonomic scope" value="Bacteria"/>
</dbReference>
<dbReference type="HOGENOM" id="CLU_074237_2_1_9"/>
<dbReference type="OrthoDB" id="9802408at2"/>
<dbReference type="Proteomes" id="UP000001732">
    <property type="component" value="Chromosome"/>
</dbReference>
<dbReference type="GO" id="GO:0022625">
    <property type="term" value="C:cytosolic large ribosomal subunit"/>
    <property type="evidence" value="ECO:0007669"/>
    <property type="project" value="TreeGrafter"/>
</dbReference>
<dbReference type="GO" id="GO:0070180">
    <property type="term" value="F:large ribosomal subunit rRNA binding"/>
    <property type="evidence" value="ECO:0007669"/>
    <property type="project" value="UniProtKB-UniRule"/>
</dbReference>
<dbReference type="GO" id="GO:0003735">
    <property type="term" value="F:structural constituent of ribosome"/>
    <property type="evidence" value="ECO:0007669"/>
    <property type="project" value="InterPro"/>
</dbReference>
<dbReference type="GO" id="GO:0006412">
    <property type="term" value="P:translation"/>
    <property type="evidence" value="ECO:0007669"/>
    <property type="project" value="UniProtKB-UniRule"/>
</dbReference>
<dbReference type="CDD" id="cd00349">
    <property type="entry name" value="Ribosomal_L11"/>
    <property type="match status" value="1"/>
</dbReference>
<dbReference type="FunFam" id="1.10.10.250:FF:000001">
    <property type="entry name" value="50S ribosomal protein L11"/>
    <property type="match status" value="1"/>
</dbReference>
<dbReference type="FunFam" id="3.30.1550.10:FF:000005">
    <property type="entry name" value="50S ribosomal protein L11"/>
    <property type="match status" value="1"/>
</dbReference>
<dbReference type="Gene3D" id="1.10.10.250">
    <property type="entry name" value="Ribosomal protein L11, C-terminal domain"/>
    <property type="match status" value="1"/>
</dbReference>
<dbReference type="Gene3D" id="3.30.1550.10">
    <property type="entry name" value="Ribosomal protein L11/L12, N-terminal domain"/>
    <property type="match status" value="1"/>
</dbReference>
<dbReference type="HAMAP" id="MF_00736">
    <property type="entry name" value="Ribosomal_uL11"/>
    <property type="match status" value="1"/>
</dbReference>
<dbReference type="InterPro" id="IPR000911">
    <property type="entry name" value="Ribosomal_uL11"/>
</dbReference>
<dbReference type="InterPro" id="IPR006519">
    <property type="entry name" value="Ribosomal_uL11_bac-typ"/>
</dbReference>
<dbReference type="InterPro" id="IPR020783">
    <property type="entry name" value="Ribosomal_uL11_C"/>
</dbReference>
<dbReference type="InterPro" id="IPR036769">
    <property type="entry name" value="Ribosomal_uL11_C_sf"/>
</dbReference>
<dbReference type="InterPro" id="IPR020785">
    <property type="entry name" value="Ribosomal_uL11_CS"/>
</dbReference>
<dbReference type="InterPro" id="IPR020784">
    <property type="entry name" value="Ribosomal_uL11_N"/>
</dbReference>
<dbReference type="InterPro" id="IPR036796">
    <property type="entry name" value="Ribosomal_uL11_N_sf"/>
</dbReference>
<dbReference type="NCBIfam" id="TIGR01632">
    <property type="entry name" value="L11_bact"/>
    <property type="match status" value="1"/>
</dbReference>
<dbReference type="PANTHER" id="PTHR11661">
    <property type="entry name" value="60S RIBOSOMAL PROTEIN L12"/>
    <property type="match status" value="1"/>
</dbReference>
<dbReference type="PANTHER" id="PTHR11661:SF1">
    <property type="entry name" value="LARGE RIBOSOMAL SUBUNIT PROTEIN UL11M"/>
    <property type="match status" value="1"/>
</dbReference>
<dbReference type="Pfam" id="PF00298">
    <property type="entry name" value="Ribosomal_L11"/>
    <property type="match status" value="1"/>
</dbReference>
<dbReference type="Pfam" id="PF03946">
    <property type="entry name" value="Ribosomal_L11_N"/>
    <property type="match status" value="1"/>
</dbReference>
<dbReference type="SMART" id="SM00649">
    <property type="entry name" value="RL11"/>
    <property type="match status" value="1"/>
</dbReference>
<dbReference type="SUPFAM" id="SSF54747">
    <property type="entry name" value="Ribosomal L11/L12e N-terminal domain"/>
    <property type="match status" value="1"/>
</dbReference>
<dbReference type="SUPFAM" id="SSF46906">
    <property type="entry name" value="Ribosomal protein L11, C-terminal domain"/>
    <property type="match status" value="1"/>
</dbReference>
<dbReference type="PROSITE" id="PS00359">
    <property type="entry name" value="RIBOSOMAL_L11"/>
    <property type="match status" value="1"/>
</dbReference>
<gene>
    <name evidence="1" type="primary">rplK</name>
    <name type="ordered locus">COPRO5265_0952</name>
</gene>
<reference key="1">
    <citation type="submission" date="2008-08" db="EMBL/GenBank/DDBJ databases">
        <title>The complete genome sequence of Coprothermobacter proteolyticus strain ATCC 5245 / DSM 5265 / BT.</title>
        <authorList>
            <person name="Dodson R.J."/>
            <person name="Durkin A.S."/>
            <person name="Wu M."/>
            <person name="Eisen J."/>
            <person name="Sutton G."/>
        </authorList>
    </citation>
    <scope>NUCLEOTIDE SEQUENCE [LARGE SCALE GENOMIC DNA]</scope>
    <source>
        <strain>ATCC 35245 / DSM 5265 / OCM 4 / BT</strain>
    </source>
</reference>
<evidence type="ECO:0000255" key="1">
    <source>
        <dbReference type="HAMAP-Rule" id="MF_00736"/>
    </source>
</evidence>
<evidence type="ECO:0000305" key="2"/>
<feature type="chain" id="PRO_1000195606" description="Large ribosomal subunit protein uL11">
    <location>
        <begin position="1"/>
        <end position="141"/>
    </location>
</feature>